<gene>
    <name type="primary">NRT2.3</name>
    <name type="ordered locus">Os01g0704100</name>
    <name type="ordered locus">LOC_Os01g50820</name>
    <name type="ORF">OsJ_03170</name>
    <name type="ORF">P0421H07.34-1</name>
    <name type="ORF">P0421H07.34-2</name>
    <name type="ORF">P0684B02.9-1</name>
    <name type="ORF">P0684B02.9-2</name>
</gene>
<comment type="function">
    <text evidence="5 6 7">Involved in nitrate transport, but does not seem to be able to mediate transport by its own. Acts as a dual component transporter with NAR2.1. Imports nitrate with high affinity when expressed with NAR2.1 in a heterologous system (Xenopus oocytes). Plays a key role in long-distance nitrate transport from root to shoot particularly at low external nitrate supply.</text>
</comment>
<comment type="biophysicochemical properties">
    <kinetics>
        <KM evidence="6">310 uM for nitrate</KM>
    </kinetics>
</comment>
<comment type="subunit">
    <text evidence="1 6">Heterotetramer composed of two NRT2.3 and two NAR2.1 (By similarity). Isoform 1 interacts with NAR2.1, but not isoform 2.</text>
</comment>
<comment type="subcellular location">
    <subcellularLocation>
        <location evidence="7">Cell membrane</location>
        <topology evidence="7">Multi-pass membrane protein</topology>
    </subcellularLocation>
</comment>
<comment type="alternative products">
    <event type="alternative splicing"/>
    <isoform>
        <id>Q94JG1-1</id>
        <name>1</name>
        <name>OsNRT2.3a</name>
        <sequence type="displayed"/>
    </isoform>
    <isoform>
        <id>Q94JG1-2</id>
        <name>2</name>
        <name>OsNRT2.3b</name>
        <sequence type="described" ref="VSP_055400"/>
    </isoform>
</comment>
<comment type="tissue specificity">
    <text evidence="5 7">Expressed in the stelar cells of both primary and lateral roots, particularly at the site of lateral root emergence, root-shoot junction zone, vascular tissues of adventitious root primordia, leaves, germ tips and seed scutellum.</text>
</comment>
<comment type="induction">
    <text evidence="4 5 6">Circadian-regulation with a peak in the middle of the morning and at the end of the light period. Isoforms 1 and 2 are induced by sucrose in roots. Isoform 1 is induced by nitrate in roots, but not isoform 2. Isoform 1 is down-regulated by ammonium, glutatmate and aspartate in roots, but not isoform 2.</text>
</comment>
<comment type="miscellaneous">
    <text evidence="9">Plants silencing isoform 1 of NTR2.3 have impaired xylem loading of nitrate and decreased plant growth at low nitrate supply (0.5 mM).</text>
</comment>
<comment type="similarity">
    <text evidence="8">Belongs to the major facilitator superfamily. Nitrate/nitrite porter (TC 2.A.1.8) family.</text>
</comment>
<reference key="1">
    <citation type="journal article" date="2002" name="Nature">
        <title>The genome sequence and structure of rice chromosome 1.</title>
        <authorList>
            <person name="Sasaki T."/>
            <person name="Matsumoto T."/>
            <person name="Yamamoto K."/>
            <person name="Sakata K."/>
            <person name="Baba T."/>
            <person name="Katayose Y."/>
            <person name="Wu J."/>
            <person name="Niimura Y."/>
            <person name="Cheng Z."/>
            <person name="Nagamura Y."/>
            <person name="Antonio B.A."/>
            <person name="Kanamori H."/>
            <person name="Hosokawa S."/>
            <person name="Masukawa M."/>
            <person name="Arikawa K."/>
            <person name="Chiden Y."/>
            <person name="Hayashi M."/>
            <person name="Okamoto M."/>
            <person name="Ando T."/>
            <person name="Aoki H."/>
            <person name="Arita K."/>
            <person name="Hamada M."/>
            <person name="Harada C."/>
            <person name="Hijishita S."/>
            <person name="Honda M."/>
            <person name="Ichikawa Y."/>
            <person name="Idonuma A."/>
            <person name="Iijima M."/>
            <person name="Ikeda M."/>
            <person name="Ikeno M."/>
            <person name="Ito S."/>
            <person name="Ito T."/>
            <person name="Ito Y."/>
            <person name="Ito Y."/>
            <person name="Iwabuchi A."/>
            <person name="Kamiya K."/>
            <person name="Karasawa W."/>
            <person name="Katagiri S."/>
            <person name="Kikuta A."/>
            <person name="Kobayashi N."/>
            <person name="Kono I."/>
            <person name="Machita K."/>
            <person name="Maehara T."/>
            <person name="Mizuno H."/>
            <person name="Mizubayashi T."/>
            <person name="Mukai Y."/>
            <person name="Nagasaki H."/>
            <person name="Nakashima M."/>
            <person name="Nakama Y."/>
            <person name="Nakamichi Y."/>
            <person name="Nakamura M."/>
            <person name="Namiki N."/>
            <person name="Negishi M."/>
            <person name="Ohta I."/>
            <person name="Ono N."/>
            <person name="Saji S."/>
            <person name="Sakai K."/>
            <person name="Shibata M."/>
            <person name="Shimokawa T."/>
            <person name="Shomura A."/>
            <person name="Song J."/>
            <person name="Takazaki Y."/>
            <person name="Terasawa K."/>
            <person name="Tsuji K."/>
            <person name="Waki K."/>
            <person name="Yamagata H."/>
            <person name="Yamane H."/>
            <person name="Yoshiki S."/>
            <person name="Yoshihara R."/>
            <person name="Yukawa K."/>
            <person name="Zhong H."/>
            <person name="Iwama H."/>
            <person name="Endo T."/>
            <person name="Ito H."/>
            <person name="Hahn J.H."/>
            <person name="Kim H.-I."/>
            <person name="Eun M.-Y."/>
            <person name="Yano M."/>
            <person name="Jiang J."/>
            <person name="Gojobori T."/>
        </authorList>
    </citation>
    <scope>NUCLEOTIDE SEQUENCE [LARGE SCALE GENOMIC DNA]</scope>
    <source>
        <strain>cv. Nipponbare</strain>
    </source>
</reference>
<reference key="2">
    <citation type="journal article" date="2005" name="Nature">
        <title>The map-based sequence of the rice genome.</title>
        <authorList>
            <consortium name="International rice genome sequencing project (IRGSP)"/>
        </authorList>
    </citation>
    <scope>NUCLEOTIDE SEQUENCE [LARGE SCALE GENOMIC DNA]</scope>
    <source>
        <strain>cv. Nipponbare</strain>
    </source>
</reference>
<reference key="3">
    <citation type="journal article" date="2008" name="Nucleic Acids Res.">
        <title>The rice annotation project database (RAP-DB): 2008 update.</title>
        <authorList>
            <consortium name="The rice annotation project (RAP)"/>
        </authorList>
    </citation>
    <scope>GENOME REANNOTATION</scope>
    <source>
        <strain>cv. Nipponbare</strain>
    </source>
</reference>
<reference key="4">
    <citation type="journal article" date="2013" name="Rice">
        <title>Improvement of the Oryza sativa Nipponbare reference genome using next generation sequence and optical map data.</title>
        <authorList>
            <person name="Kawahara Y."/>
            <person name="de la Bastide M."/>
            <person name="Hamilton J.P."/>
            <person name="Kanamori H."/>
            <person name="McCombie W.R."/>
            <person name="Ouyang S."/>
            <person name="Schwartz D.C."/>
            <person name="Tanaka T."/>
            <person name="Wu J."/>
            <person name="Zhou S."/>
            <person name="Childs K.L."/>
            <person name="Davidson R.M."/>
            <person name="Lin H."/>
            <person name="Quesada-Ocampo L."/>
            <person name="Vaillancourt B."/>
            <person name="Sakai H."/>
            <person name="Lee S.S."/>
            <person name="Kim J."/>
            <person name="Numa H."/>
            <person name="Itoh T."/>
            <person name="Buell C.R."/>
            <person name="Matsumoto T."/>
        </authorList>
    </citation>
    <scope>GENOME REANNOTATION</scope>
    <source>
        <strain>cv. Nipponbare</strain>
    </source>
</reference>
<reference key="5">
    <citation type="journal article" date="2005" name="PLoS Biol.">
        <title>The genomes of Oryza sativa: a history of duplications.</title>
        <authorList>
            <person name="Yu J."/>
            <person name="Wang J."/>
            <person name="Lin W."/>
            <person name="Li S."/>
            <person name="Li H."/>
            <person name="Zhou J."/>
            <person name="Ni P."/>
            <person name="Dong W."/>
            <person name="Hu S."/>
            <person name="Zeng C."/>
            <person name="Zhang J."/>
            <person name="Zhang Y."/>
            <person name="Li R."/>
            <person name="Xu Z."/>
            <person name="Li S."/>
            <person name="Li X."/>
            <person name="Zheng H."/>
            <person name="Cong L."/>
            <person name="Lin L."/>
            <person name="Yin J."/>
            <person name="Geng J."/>
            <person name="Li G."/>
            <person name="Shi J."/>
            <person name="Liu J."/>
            <person name="Lv H."/>
            <person name="Li J."/>
            <person name="Wang J."/>
            <person name="Deng Y."/>
            <person name="Ran L."/>
            <person name="Shi X."/>
            <person name="Wang X."/>
            <person name="Wu Q."/>
            <person name="Li C."/>
            <person name="Ren X."/>
            <person name="Wang J."/>
            <person name="Wang X."/>
            <person name="Li D."/>
            <person name="Liu D."/>
            <person name="Zhang X."/>
            <person name="Ji Z."/>
            <person name="Zhao W."/>
            <person name="Sun Y."/>
            <person name="Zhang Z."/>
            <person name="Bao J."/>
            <person name="Han Y."/>
            <person name="Dong L."/>
            <person name="Ji J."/>
            <person name="Chen P."/>
            <person name="Wu S."/>
            <person name="Liu J."/>
            <person name="Xiao Y."/>
            <person name="Bu D."/>
            <person name="Tan J."/>
            <person name="Yang L."/>
            <person name="Ye C."/>
            <person name="Zhang J."/>
            <person name="Xu J."/>
            <person name="Zhou Y."/>
            <person name="Yu Y."/>
            <person name="Zhang B."/>
            <person name="Zhuang S."/>
            <person name="Wei H."/>
            <person name="Liu B."/>
            <person name="Lei M."/>
            <person name="Yu H."/>
            <person name="Li Y."/>
            <person name="Xu H."/>
            <person name="Wei S."/>
            <person name="He X."/>
            <person name="Fang L."/>
            <person name="Zhang Z."/>
            <person name="Zhang Y."/>
            <person name="Huang X."/>
            <person name="Su Z."/>
            <person name="Tong W."/>
            <person name="Li J."/>
            <person name="Tong Z."/>
            <person name="Li S."/>
            <person name="Ye J."/>
            <person name="Wang L."/>
            <person name="Fang L."/>
            <person name="Lei T."/>
            <person name="Chen C.-S."/>
            <person name="Chen H.-C."/>
            <person name="Xu Z."/>
            <person name="Li H."/>
            <person name="Huang H."/>
            <person name="Zhang F."/>
            <person name="Xu H."/>
            <person name="Li N."/>
            <person name="Zhao C."/>
            <person name="Li S."/>
            <person name="Dong L."/>
            <person name="Huang Y."/>
            <person name="Li L."/>
            <person name="Xi Y."/>
            <person name="Qi Q."/>
            <person name="Li W."/>
            <person name="Zhang B."/>
            <person name="Hu W."/>
            <person name="Zhang Y."/>
            <person name="Tian X."/>
            <person name="Jiao Y."/>
            <person name="Liang X."/>
            <person name="Jin J."/>
            <person name="Gao L."/>
            <person name="Zheng W."/>
            <person name="Hao B."/>
            <person name="Liu S.-M."/>
            <person name="Wang W."/>
            <person name="Yuan L."/>
            <person name="Cao M."/>
            <person name="McDermott J."/>
            <person name="Samudrala R."/>
            <person name="Wang J."/>
            <person name="Wong G.K.-S."/>
            <person name="Yang H."/>
        </authorList>
    </citation>
    <scope>NUCLEOTIDE SEQUENCE [LARGE SCALE GENOMIC DNA]</scope>
    <source>
        <strain>cv. Nipponbare</strain>
    </source>
</reference>
<reference key="6">
    <citation type="journal article" date="2003" name="Science">
        <title>Collection, mapping, and annotation of over 28,000 cDNA clones from japonica rice.</title>
        <authorList>
            <consortium name="The rice full-length cDNA consortium"/>
        </authorList>
    </citation>
    <scope>NUCLEOTIDE SEQUENCE [LARGE SCALE MRNA] (ISOFORM 1)</scope>
    <source>
        <strain>cv. Nipponbare</strain>
    </source>
</reference>
<reference key="7">
    <citation type="journal article" date="2011" name="J. Exp. Bot.">
        <title>Spatial expression and regulation of rice high-affinity nitrate transporters by nitrogen and carbon status.</title>
        <authorList>
            <person name="Feng H."/>
            <person name="Yan M."/>
            <person name="Fan X."/>
            <person name="Li B."/>
            <person name="Shen Q."/>
            <person name="Miller A.J."/>
            <person name="Xu G."/>
        </authorList>
    </citation>
    <scope>FUNCTION</scope>
    <scope>TISSUE SPECIFICITY</scope>
    <scope>INDUCTION</scope>
</reference>
<reference key="8">
    <citation type="journal article" date="2011" name="J. Plant Res.">
        <title>High-affinity nitrate uptake by rice (Oryza sativa) coleoptiles.</title>
        <authorList>
            <person name="Takayanagi S."/>
            <person name="Takagi Y."/>
            <person name="Araki R."/>
            <person name="Hasegawa H."/>
        </authorList>
    </citation>
    <scope>INDUCTION BY NITRATE</scope>
</reference>
<reference key="9">
    <citation type="journal article" date="2011" name="Plant Cell Environ.">
        <title>Rice OsNAR2.1 interacts with OsNRT2.1, OsNRT2.2 and OsNRT2.3a nitrate transporters to provide uptake over high and low concentration ranges.</title>
        <authorList>
            <person name="Yan M."/>
            <person name="Fan X."/>
            <person name="Feng H."/>
            <person name="Miller A.J."/>
            <person name="Shen Q."/>
            <person name="Xu G."/>
        </authorList>
    </citation>
    <scope>FUNCTION</scope>
    <scope>BIOPHYSICOCHEMICAL PROPERTIES</scope>
    <scope>INTERACTION WITH NAR2.1</scope>
    <scope>INDUCTION</scope>
</reference>
<reference key="10">
    <citation type="journal article" date="2012" name="Plant Physiol.">
        <title>Knockdown of a rice stelar nitrate transporter alters long-distance translocation but not root influx.</title>
        <authorList>
            <person name="Tang Z."/>
            <person name="Fan X."/>
            <person name="Li Q."/>
            <person name="Feng H."/>
            <person name="Miller A.J."/>
            <person name="Shen Q."/>
            <person name="Xu G."/>
        </authorList>
    </citation>
    <scope>FUNCTION</scope>
    <scope>SUBCELLULAR LOCATION</scope>
    <scope>TISSUE SPECIFICITY</scope>
</reference>
<protein>
    <recommendedName>
        <fullName>High-affinity nitrate transporter 2.3</fullName>
        <shortName>OsNRT2.3</shortName>
    </recommendedName>
</protein>
<name>NRT23_ORYSJ</name>
<sequence length="516" mass="55407">MEAKPVAMEVEGVEAAGGKPRFRMPVDSDLKATEFWLFSFARPHMASFHMAWFSFFCCFVSTFAAPPLLPLIRDTLGLTATDIGNAGIASVSGAVFARLAMGTACDLVGPRLASASLILLTTPAVYCSSIIQSPSGYLLVRFFTGISLASFVSAQFWMSSMFSAPKVGLANGVAGGWGNLGGGAVQLLMPLVYEAIHKIGSTPFTAWRIAFFIPGLMQTFSAIAVLAFGQDMPGGNYGKLHKTGDMHKDSFGNVLRHALTNYRGWILALTYGYSFGVELTIDNVVHQYFYDRFDVNLQTAGLIAASFGMANIISRPGGGLLSDWLSSRYGMRGRLWGLWTVQTIGGVLCVVLGIVDFSFAASVAVMVLFSFFVQAACGLTFGIVPFVSRRSLGLISGMTGGGGNVGAVLTQYIFFHGTKYKTETGIKYMGLMIIACTLPVMLIYFPQWGGMLVGPRKGATAEEYYSREWSDHEREKGFNAASVRFAENSVREGGRSSANGGQPRHTVPVDASPAGV</sequence>
<feature type="chain" id="PRO_0000430006" description="High-affinity nitrate transporter 2.3">
    <location>
        <begin position="1"/>
        <end position="516"/>
    </location>
</feature>
<feature type="transmembrane region" description="Helical" evidence="2">
    <location>
        <begin position="52"/>
        <end position="72"/>
    </location>
</feature>
<feature type="transmembrane region" description="Helical" evidence="2">
    <location>
        <begin position="76"/>
        <end position="96"/>
    </location>
</feature>
<feature type="transmembrane region" description="Helical" evidence="2">
    <location>
        <begin position="112"/>
        <end position="132"/>
    </location>
</feature>
<feature type="transmembrane region" description="Helical" evidence="2">
    <location>
        <begin position="142"/>
        <end position="162"/>
    </location>
</feature>
<feature type="transmembrane region" description="Helical" evidence="2">
    <location>
        <begin position="172"/>
        <end position="192"/>
    </location>
</feature>
<feature type="transmembrane region" description="Helical" evidence="2">
    <location>
        <begin position="209"/>
        <end position="229"/>
    </location>
</feature>
<feature type="transmembrane region" description="Helical" evidence="2">
    <location>
        <begin position="265"/>
        <end position="285"/>
    </location>
</feature>
<feature type="transmembrane region" description="Helical" evidence="2">
    <location>
        <begin position="299"/>
        <end position="319"/>
    </location>
</feature>
<feature type="transmembrane region" description="Helical" evidence="2">
    <location>
        <begin position="335"/>
        <end position="354"/>
    </location>
</feature>
<feature type="transmembrane region" description="Helical" evidence="2">
    <location>
        <begin position="367"/>
        <end position="387"/>
    </location>
</feature>
<feature type="transmembrane region" description="Helical" evidence="2">
    <location>
        <begin position="395"/>
        <end position="415"/>
    </location>
</feature>
<feature type="transmembrane region" description="Helical" evidence="2">
    <location>
        <begin position="425"/>
        <end position="445"/>
    </location>
</feature>
<feature type="region of interest" description="Disordered" evidence="3">
    <location>
        <begin position="489"/>
        <end position="516"/>
    </location>
</feature>
<feature type="splice variant" id="VSP_055400" description="In isoform 2." evidence="8">
    <location>
        <begin position="64"/>
        <end position="93"/>
    </location>
</feature>
<organism>
    <name type="scientific">Oryza sativa subsp. japonica</name>
    <name type="common">Rice</name>
    <dbReference type="NCBI Taxonomy" id="39947"/>
    <lineage>
        <taxon>Eukaryota</taxon>
        <taxon>Viridiplantae</taxon>
        <taxon>Streptophyta</taxon>
        <taxon>Embryophyta</taxon>
        <taxon>Tracheophyta</taxon>
        <taxon>Spermatophyta</taxon>
        <taxon>Magnoliopsida</taxon>
        <taxon>Liliopsida</taxon>
        <taxon>Poales</taxon>
        <taxon>Poaceae</taxon>
        <taxon>BOP clade</taxon>
        <taxon>Oryzoideae</taxon>
        <taxon>Oryzeae</taxon>
        <taxon>Oryzinae</taxon>
        <taxon>Oryza</taxon>
        <taxon>Oryza sativa</taxon>
    </lineage>
</organism>
<keyword id="KW-0025">Alternative splicing</keyword>
<keyword id="KW-1003">Cell membrane</keyword>
<keyword id="KW-0472">Membrane</keyword>
<keyword id="KW-0534">Nitrate assimilation</keyword>
<keyword id="KW-1185">Reference proteome</keyword>
<keyword id="KW-0812">Transmembrane</keyword>
<keyword id="KW-1133">Transmembrane helix</keyword>
<accession>Q94JG1</accession>
<accession>A0A0P0V747</accession>
<accession>Q5N9S1</accession>
<proteinExistence type="evidence at protein level"/>
<evidence type="ECO:0000250" key="1"/>
<evidence type="ECO:0000255" key="2"/>
<evidence type="ECO:0000256" key="3">
    <source>
        <dbReference type="SAM" id="MobiDB-lite"/>
    </source>
</evidence>
<evidence type="ECO:0000269" key="4">
    <source>
    </source>
</evidence>
<evidence type="ECO:0000269" key="5">
    <source>
    </source>
</evidence>
<evidence type="ECO:0000269" key="6">
    <source>
    </source>
</evidence>
<evidence type="ECO:0000269" key="7">
    <source>
    </source>
</evidence>
<evidence type="ECO:0000305" key="8"/>
<evidence type="ECO:0000305" key="9">
    <source>
    </source>
</evidence>
<dbReference type="EMBL" id="AP003023">
    <property type="protein sequence ID" value="BAB44020.1"/>
    <property type="molecule type" value="Genomic_DNA"/>
</dbReference>
<dbReference type="EMBL" id="AP003023">
    <property type="protein sequence ID" value="BAD81572.1"/>
    <property type="molecule type" value="Genomic_DNA"/>
</dbReference>
<dbReference type="EMBL" id="AP003245">
    <property type="protein sequence ID" value="BAB92299.1"/>
    <property type="molecule type" value="Genomic_DNA"/>
</dbReference>
<dbReference type="EMBL" id="AP003245">
    <property type="protein sequence ID" value="BAD81794.1"/>
    <property type="molecule type" value="Genomic_DNA"/>
</dbReference>
<dbReference type="EMBL" id="AP008207">
    <property type="protein sequence ID" value="BAF05917.1"/>
    <property type="molecule type" value="Genomic_DNA"/>
</dbReference>
<dbReference type="EMBL" id="AP014957">
    <property type="protein sequence ID" value="BAS73916.1"/>
    <property type="molecule type" value="Genomic_DNA"/>
</dbReference>
<dbReference type="EMBL" id="AP014957">
    <property type="protein sequence ID" value="BAS73917.1"/>
    <property type="molecule type" value="Genomic_DNA"/>
</dbReference>
<dbReference type="EMBL" id="CM000138">
    <property type="protein sequence ID" value="EEE55262.1"/>
    <property type="molecule type" value="Genomic_DNA"/>
</dbReference>
<dbReference type="EMBL" id="AK109776">
    <property type="protein sequence ID" value="BAG98894.1"/>
    <property type="molecule type" value="mRNA"/>
</dbReference>
<dbReference type="RefSeq" id="XP_015628524.1">
    <property type="nucleotide sequence ID" value="XM_015773038.1"/>
</dbReference>
<dbReference type="SMR" id="Q94JG1"/>
<dbReference type="FunCoup" id="Q94JG1">
    <property type="interactions" value="2"/>
</dbReference>
<dbReference type="STRING" id="39947.Q94JG1"/>
<dbReference type="PaxDb" id="39947-Q94JG1"/>
<dbReference type="EnsemblPlants" id="Os01t0704100-02">
    <molecule id="Q94JG1-1"/>
    <property type="protein sequence ID" value="Os01t0704100-02"/>
    <property type="gene ID" value="Os01g0704100"/>
</dbReference>
<dbReference type="Gramene" id="Os01t0704100-02">
    <molecule id="Q94JG1-1"/>
    <property type="protein sequence ID" value="Os01t0704100-02"/>
    <property type="gene ID" value="Os01g0704100"/>
</dbReference>
<dbReference type="KEGG" id="dosa:Os01g0704100"/>
<dbReference type="eggNOG" id="ENOG502QPIC">
    <property type="taxonomic scope" value="Eukaryota"/>
</dbReference>
<dbReference type="HOGENOM" id="CLU_024204_0_0_1"/>
<dbReference type="InParanoid" id="Q94JG1"/>
<dbReference type="OrthoDB" id="434240at2759"/>
<dbReference type="Proteomes" id="UP000000763">
    <property type="component" value="Chromosome 1"/>
</dbReference>
<dbReference type="Proteomes" id="UP000007752">
    <property type="component" value="Chromosome 1"/>
</dbReference>
<dbReference type="Proteomes" id="UP000059680">
    <property type="component" value="Chromosome 1"/>
</dbReference>
<dbReference type="GO" id="GO:0005886">
    <property type="term" value="C:plasma membrane"/>
    <property type="evidence" value="ECO:0000314"/>
    <property type="project" value="UniProtKB"/>
</dbReference>
<dbReference type="GO" id="GO:0015112">
    <property type="term" value="F:nitrate transmembrane transporter activity"/>
    <property type="evidence" value="ECO:0007669"/>
    <property type="project" value="InterPro"/>
</dbReference>
<dbReference type="GO" id="GO:0042128">
    <property type="term" value="P:nitrate assimilation"/>
    <property type="evidence" value="ECO:0007669"/>
    <property type="project" value="UniProtKB-KW"/>
</dbReference>
<dbReference type="GO" id="GO:0015706">
    <property type="term" value="P:nitrate transmembrane transport"/>
    <property type="evidence" value="ECO:0000314"/>
    <property type="project" value="UniProtKB"/>
</dbReference>
<dbReference type="CDD" id="cd17341">
    <property type="entry name" value="MFS_NRT2_like"/>
    <property type="match status" value="1"/>
</dbReference>
<dbReference type="FunFam" id="1.20.1250.20:FF:000198">
    <property type="entry name" value="High affinity nitrate transporter 2.5"/>
    <property type="match status" value="1"/>
</dbReference>
<dbReference type="FunFam" id="1.20.1250.20:FF:000053">
    <property type="entry name" value="Nitrate transporter 2.1"/>
    <property type="match status" value="1"/>
</dbReference>
<dbReference type="Gene3D" id="1.20.1250.20">
    <property type="entry name" value="MFS general substrate transporter like domains"/>
    <property type="match status" value="2"/>
</dbReference>
<dbReference type="InterPro" id="IPR011701">
    <property type="entry name" value="MFS"/>
</dbReference>
<dbReference type="InterPro" id="IPR036259">
    <property type="entry name" value="MFS_trans_sf"/>
</dbReference>
<dbReference type="InterPro" id="IPR044772">
    <property type="entry name" value="NO3_transporter"/>
</dbReference>
<dbReference type="PANTHER" id="PTHR23515">
    <property type="entry name" value="HIGH-AFFINITY NITRATE TRANSPORTER 2.3"/>
    <property type="match status" value="1"/>
</dbReference>
<dbReference type="Pfam" id="PF07690">
    <property type="entry name" value="MFS_1"/>
    <property type="match status" value="1"/>
</dbReference>
<dbReference type="SUPFAM" id="SSF103473">
    <property type="entry name" value="MFS general substrate transporter"/>
    <property type="match status" value="1"/>
</dbReference>